<reference key="1">
    <citation type="journal article" date="2000" name="Science">
        <title>Complete genome sequence of Neisseria meningitidis serogroup B strain MC58.</title>
        <authorList>
            <person name="Tettelin H."/>
            <person name="Saunders N.J."/>
            <person name="Heidelberg J.F."/>
            <person name="Jeffries A.C."/>
            <person name="Nelson K.E."/>
            <person name="Eisen J.A."/>
            <person name="Ketchum K.A."/>
            <person name="Hood D.W."/>
            <person name="Peden J.F."/>
            <person name="Dodson R.J."/>
            <person name="Nelson W.C."/>
            <person name="Gwinn M.L."/>
            <person name="DeBoy R.T."/>
            <person name="Peterson J.D."/>
            <person name="Hickey E.K."/>
            <person name="Haft D.H."/>
            <person name="Salzberg S.L."/>
            <person name="White O."/>
            <person name="Fleischmann R.D."/>
            <person name="Dougherty B.A."/>
            <person name="Mason T.M."/>
            <person name="Ciecko A."/>
            <person name="Parksey D.S."/>
            <person name="Blair E."/>
            <person name="Cittone H."/>
            <person name="Clark E.B."/>
            <person name="Cotton M.D."/>
            <person name="Utterback T.R."/>
            <person name="Khouri H.M."/>
            <person name="Qin H."/>
            <person name="Vamathevan J.J."/>
            <person name="Gill J."/>
            <person name="Scarlato V."/>
            <person name="Masignani V."/>
            <person name="Pizza M."/>
            <person name="Grandi G."/>
            <person name="Sun L."/>
            <person name="Smith H.O."/>
            <person name="Fraser C.M."/>
            <person name="Moxon E.R."/>
            <person name="Rappuoli R."/>
            <person name="Venter J.C."/>
        </authorList>
    </citation>
    <scope>NUCLEOTIDE SEQUENCE [LARGE SCALE GENOMIC DNA]</scope>
    <source>
        <strain>ATCC BAA-335 / MC58</strain>
    </source>
</reference>
<reference key="2">
    <citation type="journal article" date="2003" name="J. Exp. Med.">
        <title>Vaccination against Neisseria meningitidis using three variants of the lipoprotein GNA1870.</title>
        <authorList>
            <person name="Masignani V."/>
            <person name="Comanducci M."/>
            <person name="Giuliani M.M."/>
            <person name="Bambini S."/>
            <person name="Adu-Bobie J."/>
            <person name="Arico B."/>
            <person name="Brunelli B."/>
            <person name="Pieri A."/>
            <person name="Santini L."/>
            <person name="Savino S."/>
            <person name="Serruto D."/>
            <person name="Litt D."/>
            <person name="Kroll S."/>
            <person name="Welsch J.A."/>
            <person name="Granoff D.M."/>
            <person name="Rappuoli R."/>
            <person name="Pizza M."/>
        </authorList>
    </citation>
    <scope>NUCLEOTIDE SEQUENCE [GENOMIC DNA]</scope>
    <scope>SEQUENCE REVISION TO N-TERMINUS</scope>
    <scope>FUNCTION</scope>
    <scope>SUBCELLULAR LOCATION</scope>
    <scope>INDUCTION</scope>
    <scope>PROBABLE PALMITOYLATION AT CYS-20</scope>
    <scope>BIOTECHNOLOGY</scope>
    <source>
        <strain>ATCC BAA-335 / MC58</strain>
    </source>
</reference>
<reference key="3">
    <citation type="journal article" date="2004" name="Infect. Immun.">
        <title>Vaccine potential of the Neisseria meningitidis 2086 lipoprotein.</title>
        <authorList>
            <person name="Fletcher L.D."/>
            <person name="Bernfield L."/>
            <person name="Barniak V."/>
            <person name="Farley J.E."/>
            <person name="Howell A."/>
            <person name="Knauf M."/>
            <person name="Ooi P."/>
            <person name="Smith R.P."/>
            <person name="Weise P."/>
            <person name="Wetherell M."/>
            <person name="Xie X."/>
            <person name="Zagursky R."/>
            <person name="Zhang Y."/>
            <person name="Zlotnick G.W."/>
        </authorList>
    </citation>
    <scope>BIOTECHNOLOGY (VACCINE PRODUCTION)</scope>
</reference>
<reference key="4">
    <citation type="journal article" date="2017" name="Infect. Immun.">
        <authorList>
            <person name="Fletcher L.D."/>
            <person name="Bernfield L."/>
            <person name="Barniak V."/>
            <person name="Farley J.E."/>
            <person name="Howell A."/>
            <person name="Knauf M."/>
            <person name="Ooi P."/>
            <person name="Smith R.P."/>
            <person name="Weise P."/>
            <person name="Wetherell M."/>
            <person name="Xie X."/>
            <person name="Zagursky R."/>
            <person name="Zhang Y."/>
            <person name="Zlotnick G.W."/>
        </authorList>
    </citation>
    <scope>ERRATUM OF PUBMED:15039331</scope>
</reference>
<reference key="5">
    <citation type="journal article" date="2005" name="Infect. Immun.">
        <title>The region comprising amino acids 100 to 255 of Neisseria meningitidis lipoprotein GNA 1870 elicits bactericidal antibodies.</title>
        <authorList>
            <person name="Giuliani M.M."/>
            <person name="Santini L."/>
            <person name="Brunelli B."/>
            <person name="Biolchi A."/>
            <person name="Arico B."/>
            <person name="Di Marcello F."/>
            <person name="Cartocci E."/>
            <person name="Comanducci M."/>
            <person name="Masignani V."/>
            <person name="Lozzi L."/>
            <person name="Savino S."/>
            <person name="Scarselli M."/>
            <person name="Rappuoli R."/>
            <person name="Pizza M."/>
        </authorList>
    </citation>
    <scope>ANTIGENICITY</scope>
    <scope>DOMAIN</scope>
    <source>
        <strain>ATCC BAA-335 / MC58</strain>
    </source>
</reference>
<reference key="6">
    <citation type="journal article" date="2006" name="J. Immunol.">
        <title>Functional significance of factor H binding to Neisseria meningitidis.</title>
        <authorList>
            <person name="Schneider M.C."/>
            <person name="Exley R.M."/>
            <person name="Chan H."/>
            <person name="Feavers I."/>
            <person name="Kang Y.H."/>
            <person name="Sim R.B."/>
            <person name="Tang C.M."/>
        </authorList>
    </citation>
    <scope>FUNCTION</scope>
    <scope>BACTERIAL FACTOR H-BINDING</scope>
    <source>
        <strain>ATCC BAA-335 / MC58</strain>
    </source>
</reference>
<reference key="7">
    <citation type="journal article" date="2006" name="J. Immunol.">
        <title>The meningococcal vaccine candidate GNA1870 binds the complement regulatory protein factor H and enhances serum resistance.</title>
        <authorList>
            <person name="Madico G."/>
            <person name="Welsch J.A."/>
            <person name="Lewis L.A."/>
            <person name="McNaughton A."/>
            <person name="Perlman D.H."/>
            <person name="Costello C.E."/>
            <person name="Ngampasutadol J."/>
            <person name="Vogel U."/>
            <person name="Granoff D.M."/>
            <person name="Ram S."/>
        </authorList>
    </citation>
    <scope>INTERACTION WITH HOST FACTOR H</scope>
    <scope>DISRUPTION PHENOTYPE</scope>
    <source>
        <strain>ATCC BAA-335 / MC58</strain>
    </source>
</reference>
<reference key="8">
    <citation type="journal article" date="2006" name="Proc. Natl. Acad. Sci. U.S.A.">
        <title>A universal vaccine for serogroup B meningococcus.</title>
        <authorList>
            <person name="Giuliani M.M."/>
            <person name="Adu-Bobie J."/>
            <person name="Comanducci M."/>
            <person name="Arico B."/>
            <person name="Savino S."/>
            <person name="Santini L."/>
            <person name="Brunelli B."/>
            <person name="Bambini S."/>
            <person name="Biolchi A."/>
            <person name="Capecchi B."/>
            <person name="Cartocci E."/>
            <person name="Ciucchi L."/>
            <person name="Di Marcello F."/>
            <person name="Ferlicca F."/>
            <person name="Galli B."/>
            <person name="Luzzi E."/>
            <person name="Masignani V."/>
            <person name="Serruto D."/>
            <person name="Veggi D."/>
            <person name="Contorni M."/>
            <person name="Morandi M."/>
            <person name="Bartalesi A."/>
            <person name="Cinotti V."/>
            <person name="Mannucci D."/>
            <person name="Titta F."/>
            <person name="Ovidi E."/>
            <person name="Welsch J.A."/>
            <person name="Granoff D."/>
            <person name="Rappuoli R."/>
            <person name="Pizza M."/>
        </authorList>
    </citation>
    <scope>BIOTECHNOLOGY</scope>
</reference>
<reference evidence="31" key="9">
    <citation type="journal article" date="2006" name="J. Biol. Chem.">
        <title>Solution structure of the immunodominant domain of protective antigen GNA1870 of Neisseria meningitidis.</title>
        <authorList>
            <person name="Cantini F."/>
            <person name="Savino S."/>
            <person name="Scarselli M."/>
            <person name="Masignani V."/>
            <person name="Pizza M."/>
            <person name="Romagnoli G."/>
            <person name="Swennen E."/>
            <person name="Veggi D."/>
            <person name="Banci L."/>
            <person name="Rappuoli R."/>
        </authorList>
    </citation>
    <scope>STRUCTURE BY NMR OF 120-274</scope>
    <scope>DOMAIN</scope>
    <source>
        <strain>ATCC BAA-335 / MC58</strain>
    </source>
</reference>
<reference evidence="19 20" key="10">
    <citation type="journal article" date="2009" name="Nature">
        <title>Neisseria meningitidis recruits factor H using protein mimicry of host carbohydrates.</title>
        <authorList>
            <person name="Schneider M.C."/>
            <person name="Prosser B.E."/>
            <person name="Caesar J.J."/>
            <person name="Kugelberg E."/>
            <person name="Li S."/>
            <person name="Zhang Q."/>
            <person name="Quoraishi S."/>
            <person name="Lovett J.E."/>
            <person name="Deane J.E."/>
            <person name="Sim R.B."/>
            <person name="Roversi P."/>
            <person name="Johnson S."/>
            <person name="Tang C.M."/>
            <person name="Lea S.M."/>
        </authorList>
    </citation>
    <scope>X-RAY CRYSTALLOGRAPHY (2.35 ANGSTROMS) OF 25-274 IN COMPLEX WITH HUMAN COMPLEMENT FACTOR H</scope>
    <scope>FUNCTION</scope>
    <scope>SUBUNIT</scope>
    <scope>DOMAIN</scope>
    <scope>MUTAGENESIS OF GLU-237 AND GLU-258</scope>
</reference>
<reference evidence="21" key="11">
    <citation type="journal article" date="2011" name="Sci. Transl. Med.">
        <title>Rational design of a meningococcal antigen inducing broad protective immunity.</title>
        <authorList>
            <person name="Scarselli M."/>
            <person name="Arico B."/>
            <person name="Brunelli B."/>
            <person name="Savino S."/>
            <person name="Di Marcello F."/>
            <person name="Palumbo E."/>
            <person name="Veggi D."/>
            <person name="Ciucchi L."/>
            <person name="Cartocci E."/>
            <person name="Bottomley M.J."/>
            <person name="Malito E."/>
            <person name="Lo Surdo P."/>
            <person name="Comanducci M."/>
            <person name="Giuliani M.M."/>
            <person name="Cantini F."/>
            <person name="Dragonetti S."/>
            <person name="Colaprico A."/>
            <person name="Doro F."/>
            <person name="Giannetti P."/>
            <person name="Pallaoro M."/>
            <person name="Brogioni B."/>
            <person name="Tontini M."/>
            <person name="Hilleringmann M."/>
            <person name="Nardi-Dei V."/>
            <person name="Banci L."/>
            <person name="Pizza M."/>
            <person name="Rappuoli R."/>
        </authorList>
    </citation>
    <scope>X-RAY CRYSTALLOGRAPHY (1.90 ANGSTROMS) OF 27-274</scope>
    <scope>FUNCTION</scope>
    <scope>DOMAIN</scope>
    <scope>BIOTECHNOLOGY</scope>
    <scope>MUTAGENESIS OF 153-ILE--THR-170; 192-ALA-ALA-193; 211-ASP--ALA-236 AND LYS-249</scope>
    <source>
        <strain>ATCC BAA-335 / MC58</strain>
    </source>
</reference>
<reference evidence="23 24" key="12">
    <citation type="journal article" date="2012" name="PLoS Pathog.">
        <title>Design and evaluation of meningococcal vaccines through structure-based modification of host and pathogen molecules.</title>
        <authorList>
            <person name="Johnson S."/>
            <person name="Tan L."/>
            <person name="van der Veen S."/>
            <person name="Caesar J."/>
            <person name="Goicoechea De Jorge E."/>
            <person name="Harding R.J."/>
            <person name="Bai X."/>
            <person name="Exley R.M."/>
            <person name="Ward P.N."/>
            <person name="Ruivo N."/>
            <person name="Trivedi K."/>
            <person name="Cumber E."/>
            <person name="Jones R."/>
            <person name="Newham L."/>
            <person name="Staunton D."/>
            <person name="Ufret-Vincenty R."/>
            <person name="Borrow R."/>
            <person name="Pickering M.C."/>
            <person name="Lea S.M."/>
            <person name="Tang C.M."/>
        </authorList>
    </citation>
    <scope>X-RAY CRYSTALLOGRAPHY (2.40 ANGSTROMS) OF 27-274 IN COMPLEX WITH HUMAN COMPLEMENT FACTOR H</scope>
    <scope>FUNCTION</scope>
    <scope>SUBUNIT</scope>
    <scope>DOMAIN</scope>
    <scope>MUTAGENESIS OF GLU-237 AND GLU-258</scope>
</reference>
<reference evidence="22" key="13">
    <citation type="journal article" date="2013" name="Proc. Natl. Acad. Sci. U.S.A.">
        <title>Defining a protective epitope on factor H binding protein, a key meningococcal virulence factor and vaccine antigen.</title>
        <authorList>
            <person name="Malito E."/>
            <person name="Faleri A."/>
            <person name="Lo Surdo P."/>
            <person name="Veggi D."/>
            <person name="Maruggi G."/>
            <person name="Grassi E."/>
            <person name="Cartocci E."/>
            <person name="Bertoldi I."/>
            <person name="Genovese A."/>
            <person name="Santini L."/>
            <person name="Romagnoli G."/>
            <person name="Borgogni E."/>
            <person name="Brier S."/>
            <person name="Lo Passo C."/>
            <person name="Domina M."/>
            <person name="Castellino F."/>
            <person name="Felici F."/>
            <person name="van der Veen S."/>
            <person name="Johnson S."/>
            <person name="Lea S.M."/>
            <person name="Tang C.M."/>
            <person name="Pizza M."/>
            <person name="Savino S."/>
            <person name="Norais N."/>
            <person name="Rappuoli R."/>
            <person name="Bottomley M.J."/>
            <person name="Masignani V."/>
        </authorList>
    </citation>
    <scope>X-RAY CRYSTALLOGRAPHY (1.80 ANGSTROMS) OF 23-274</scope>
</reference>
<reference evidence="28" key="14">
    <citation type="journal article" date="2016" name="Biochem. J.">
        <title>Neisseria meningitidis factor H-binding protein bound to monoclonal antibody JAR5: implications for antibody synergy.</title>
        <authorList>
            <person name="Malito E."/>
            <person name="Lo Surdo P."/>
            <person name="Veggi D."/>
            <person name="Santini L."/>
            <person name="Stefek H."/>
            <person name="Brunelli B."/>
            <person name="Luzzi E."/>
            <person name="Bottomley M.J."/>
            <person name="Beernink P.T."/>
            <person name="Scarselli M."/>
        </authorList>
    </citation>
    <scope>X-RAY CRYSTALLOGRAPHY (2.98 ANGSTROMS) OF 23-274</scope>
</reference>
<reference evidence="27" key="15">
    <citation type="journal article" date="2018" name="Nat. Commun.">
        <title>Crystal structure reveals vaccine elicited bactericidal human antibody targeting a conserved epitope on meningococcal fHbp.</title>
        <authorList>
            <person name="Lopez-Sagaseta J."/>
            <person name="Beernink P.T."/>
            <person name="Bianchi F."/>
            <person name="Santini L."/>
            <person name="Frigimelica E."/>
            <person name="Lucas A.H."/>
            <person name="Pizza M."/>
            <person name="Bottomley M.J."/>
        </authorList>
    </citation>
    <scope>X-RAY CRYSTALLOGRAPHY (2.19 ANGSTROMS) OF 27-274</scope>
</reference>
<reference evidence="25 26" key="16">
    <citation type="journal article" date="2018" name="Nat. Commun.">
        <title>Structure-based design of chimeric antigens for multivalent protein vaccines.</title>
        <authorList>
            <person name="Hollingshead S."/>
            <person name="Jongerius I."/>
            <person name="Exley R.M."/>
            <person name="Johnson S."/>
            <person name="Lea S.M."/>
            <person name="Tang C.M."/>
        </authorList>
    </citation>
    <scope>X-RAY CRYSTALLOGRAPHY (1.63 ANGSTROMS) OF 27-274</scope>
</reference>
<reference evidence="29" key="17">
    <citation type="journal article" date="2020" name="PLoS Pathog.">
        <title>4CMenB vaccine induces elite cross-protective human antibodies that compete with human factor H for binding to meningococcal fHbp.</title>
        <authorList>
            <person name="Veggi D."/>
            <person name="Bianchi F."/>
            <person name="Santini L."/>
            <person name="Lo Surdo P."/>
            <person name="Chesterman C.C."/>
            <person name="Pansegrau W."/>
            <person name="Bechi N."/>
            <person name="Huang Y."/>
            <person name="Masignani V."/>
            <person name="Pizza M."/>
            <person name="Rappuoli R."/>
            <person name="Bottomley M.J."/>
            <person name="Cozzi R."/>
            <person name="Maione D."/>
        </authorList>
    </citation>
    <scope>X-RAY CRYSTALLOGRAPHY (2.40 ANGSTROMS) OF 27-274</scope>
</reference>
<reference evidence="30" key="18">
    <citation type="submission" date="2022-10" db="PDB data bank">
        <title>Active learning for rapid design: an iterative ai app for accelerated vaccine design that combines active m learning and high-Throughput experimental evaluation.</title>
        <authorList>
            <person name="Chesterman C."/>
            <person name="Malito E."/>
            <person name="Bottomley M.J."/>
        </authorList>
    </citation>
    <scope>X-RAY CRYSTALLOGRAPHY (2.90 ANGSTROMS) OF 27-274</scope>
</reference>
<evidence type="ECO:0000255" key="1">
    <source>
        <dbReference type="PROSITE-ProRule" id="PRU00303"/>
    </source>
</evidence>
<evidence type="ECO:0000269" key="2">
    <source>
    </source>
</evidence>
<evidence type="ECO:0000269" key="3">
    <source>
    </source>
</evidence>
<evidence type="ECO:0000269" key="4">
    <source>
    </source>
</evidence>
<evidence type="ECO:0000269" key="5">
    <source>
    </source>
</evidence>
<evidence type="ECO:0000269" key="6">
    <source>
    </source>
</evidence>
<evidence type="ECO:0000269" key="7">
    <source>
    </source>
</evidence>
<evidence type="ECO:0000269" key="8">
    <source>
    </source>
</evidence>
<evidence type="ECO:0000269" key="9">
    <source>
    </source>
</evidence>
<evidence type="ECO:0000269" key="10">
    <source>
    </source>
</evidence>
<evidence type="ECO:0000269" key="11">
    <source>
    </source>
</evidence>
<evidence type="ECO:0000303" key="12">
    <source>
    </source>
</evidence>
<evidence type="ECO:0000303" key="13">
    <source>
    </source>
</evidence>
<evidence type="ECO:0000303" key="14">
    <source>
    </source>
</evidence>
<evidence type="ECO:0000305" key="15"/>
<evidence type="ECO:0000305" key="16">
    <source>
    </source>
</evidence>
<evidence type="ECO:0000305" key="17">
    <source>
    </source>
</evidence>
<evidence type="ECO:0000305" key="18">
    <source>
    </source>
</evidence>
<evidence type="ECO:0007744" key="19">
    <source>
        <dbReference type="PDB" id="2W80"/>
    </source>
</evidence>
<evidence type="ECO:0007744" key="20">
    <source>
        <dbReference type="PDB" id="2W81"/>
    </source>
</evidence>
<evidence type="ECO:0007744" key="21">
    <source>
        <dbReference type="PDB" id="2Y7S"/>
    </source>
</evidence>
<evidence type="ECO:0007744" key="22">
    <source>
        <dbReference type="PDB" id="2YPV"/>
    </source>
</evidence>
<evidence type="ECO:0007744" key="23">
    <source>
        <dbReference type="PDB" id="4AYD"/>
    </source>
</evidence>
<evidence type="ECO:0007744" key="24">
    <source>
        <dbReference type="PDB" id="4AYE"/>
    </source>
</evidence>
<evidence type="ECO:0007744" key="25">
    <source>
        <dbReference type="PDB" id="5NQX"/>
    </source>
</evidence>
<evidence type="ECO:0007744" key="26">
    <source>
        <dbReference type="PDB" id="5NQZ"/>
    </source>
</evidence>
<evidence type="ECO:0007744" key="27">
    <source>
        <dbReference type="PDB" id="5O14"/>
    </source>
</evidence>
<evidence type="ECO:0007744" key="28">
    <source>
        <dbReference type="PDB" id="5T5F"/>
    </source>
</evidence>
<evidence type="ECO:0007744" key="29">
    <source>
        <dbReference type="PDB" id="6XZW"/>
    </source>
</evidence>
<evidence type="ECO:0007744" key="30">
    <source>
        <dbReference type="PDB" id="7SBZ"/>
    </source>
</evidence>
<evidence type="ECO:0007829" key="31">
    <source>
        <dbReference type="PDB" id="1YS5"/>
    </source>
</evidence>
<evidence type="ECO:0007829" key="32">
    <source>
        <dbReference type="PDB" id="2W80"/>
    </source>
</evidence>
<evidence type="ECO:0007829" key="33">
    <source>
        <dbReference type="PDB" id="2W81"/>
    </source>
</evidence>
<evidence type="ECO:0007829" key="34">
    <source>
        <dbReference type="PDB" id="5NQZ"/>
    </source>
</evidence>
<evidence type="ECO:0007829" key="35">
    <source>
        <dbReference type="PDB" id="7KET"/>
    </source>
</evidence>
<evidence type="ECO:0007829" key="36">
    <source>
        <dbReference type="PDB" id="7LCV"/>
    </source>
</evidence>
<accession>Q9JXV4</accession>
<name>FHBP_NEIMB</name>
<keyword id="KW-0002">3D-structure</keyword>
<keyword id="KW-0998">Cell outer membrane</keyword>
<keyword id="KW-0449">Lipoprotein</keyword>
<keyword id="KW-0472">Membrane</keyword>
<keyword id="KW-0564">Palmitate</keyword>
<keyword id="KW-1185">Reference proteome</keyword>
<keyword id="KW-0964">Secreted</keyword>
<keyword id="KW-0732">Signal</keyword>
<keyword id="KW-0843">Virulence</keyword>
<gene>
    <name type="primary">fhbP</name>
    <name type="ordered locus">NMB1870</name>
</gene>
<feature type="signal peptide" evidence="1">
    <location>
        <begin position="1"/>
        <end position="19"/>
    </location>
</feature>
<feature type="chain" id="PRO_0000455080" description="Factor H binding protein">
    <location>
        <begin position="20"/>
        <end position="274"/>
    </location>
</feature>
<feature type="region of interest" description="Domain A" evidence="4">
    <location>
        <begin position="27"/>
        <end position="119"/>
    </location>
</feature>
<feature type="region of interest" description="Domain B" evidence="4">
    <location>
        <begin position="120"/>
        <end position="183"/>
    </location>
</feature>
<feature type="region of interest" description="Domain C" evidence="4">
    <location>
        <begin position="184"/>
        <end position="274"/>
    </location>
</feature>
<feature type="site" description="Important for antibody recognition" evidence="17">
    <location>
        <position position="223"/>
    </location>
</feature>
<feature type="lipid moiety-binding region" description="N-palmitoyl cysteine" evidence="1 16">
    <location>
        <position position="20"/>
    </location>
</feature>
<feature type="lipid moiety-binding region" description="S-diacylglycerol cysteine" evidence="1">
    <location>
        <position position="20"/>
    </location>
</feature>
<feature type="mutagenesis site" description="Increased vaccine efficacy (G1 variant); when associated with 192-T-K-193, 211-E--E-236 and R-249." evidence="10">
    <original>IAGEHTSFDKLPEGGRAT</original>
    <variation>LGGEHTAFNQLPDGKAE</variation>
    <location>
        <begin position="153"/>
        <end position="170"/>
    </location>
</feature>
<feature type="mutagenesis site" description="Increased vaccine efficacy (G1 variant); when associated with 153-L--E-170, 211-E--E-236 and R-249." evidence="10">
    <original>AA</original>
    <variation>TK</variation>
    <location>
        <begin position="192"/>
        <end position="193"/>
    </location>
</feature>
<feature type="mutagenesis site" description="Increased vaccine efficacy (G1 variant); when associated with 153-L--E-170, 192-T-K-193 and R-249." evidence="10">
    <original>DLAAADIKPDGKRHAVISGSVLYNQA</original>
    <variation>ELASAEIKADGKSHAVILGDVRYGSE</variation>
    <location>
        <begin position="211"/>
        <end position="236"/>
    </location>
</feature>
<feature type="mutagenesis site" description="7-fold decreased binding to fH. No longer binds fH; when associated with A-258." evidence="9 11">
    <original>E</original>
    <variation>A</variation>
    <location>
        <position position="237"/>
    </location>
</feature>
<feature type="mutagenesis site" description="Increased vaccine efficacy (G1 variant); when associated with 153-L--E-170, 192-T-K-193 and 211-E--E-236." evidence="10">
    <original>K</original>
    <variation>R</variation>
    <location>
        <position position="249"/>
    </location>
</feature>
<feature type="mutagenesis site" description="150-fold decreased binding to fH. No longer binds fH; when associated with A-237." evidence="9 11">
    <original>E</original>
    <variation>A</variation>
    <location>
        <position position="258"/>
    </location>
</feature>
<feature type="turn" evidence="34">
    <location>
        <begin position="29"/>
        <end position="32"/>
    </location>
</feature>
<feature type="helix" evidence="34">
    <location>
        <begin position="35"/>
        <end position="40"/>
    </location>
</feature>
<feature type="strand" evidence="35">
    <location>
        <begin position="45"/>
        <end position="47"/>
    </location>
</feature>
<feature type="strand" evidence="33">
    <location>
        <begin position="52"/>
        <end position="54"/>
    </location>
</feature>
<feature type="strand" evidence="36">
    <location>
        <begin position="56"/>
        <end position="59"/>
    </location>
</feature>
<feature type="strand" evidence="34">
    <location>
        <begin position="64"/>
        <end position="69"/>
    </location>
</feature>
<feature type="strand" evidence="34">
    <location>
        <begin position="72"/>
        <end position="76"/>
    </location>
</feature>
<feature type="strand" evidence="32">
    <location>
        <begin position="78"/>
        <end position="83"/>
    </location>
</feature>
<feature type="helix" evidence="34">
    <location>
        <begin position="84"/>
        <end position="86"/>
    </location>
</feature>
<feature type="strand" evidence="34">
    <location>
        <begin position="91"/>
        <end position="103"/>
    </location>
</feature>
<feature type="strand" evidence="34">
    <location>
        <begin position="106"/>
        <end position="119"/>
    </location>
</feature>
<feature type="strand" evidence="34">
    <location>
        <begin position="121"/>
        <end position="134"/>
    </location>
</feature>
<feature type="strand" evidence="34">
    <location>
        <begin position="136"/>
        <end position="138"/>
    </location>
</feature>
<feature type="strand" evidence="34">
    <location>
        <begin position="142"/>
        <end position="155"/>
    </location>
</feature>
<feature type="helix" evidence="34">
    <location>
        <begin position="160"/>
        <end position="162"/>
    </location>
</feature>
<feature type="strand" evidence="34">
    <location>
        <begin position="168"/>
        <end position="177"/>
    </location>
</feature>
<feature type="strand" evidence="34">
    <location>
        <begin position="180"/>
        <end position="190"/>
    </location>
</feature>
<feature type="turn" evidence="34">
    <location>
        <begin position="191"/>
        <end position="194"/>
    </location>
</feature>
<feature type="strand" evidence="34">
    <location>
        <begin position="195"/>
        <end position="201"/>
    </location>
</feature>
<feature type="helix" evidence="34">
    <location>
        <begin position="206"/>
        <end position="208"/>
    </location>
</feature>
<feature type="strand" evidence="34">
    <location>
        <begin position="211"/>
        <end position="219"/>
    </location>
</feature>
<feature type="strand" evidence="34">
    <location>
        <begin position="224"/>
        <end position="233"/>
    </location>
</feature>
<feature type="strand" evidence="34">
    <location>
        <begin position="236"/>
        <end position="247"/>
    </location>
</feature>
<feature type="strand" evidence="34">
    <location>
        <begin position="252"/>
        <end position="273"/>
    </location>
</feature>
<comment type="function">
    <text evidence="2 3 4 6 10 11 18">A bacterial surface lipoprotein that binds host (human) complement factor H (fH, gene CFH), binding contributes to the avoidance of complement-mediated lysis by N.meningitidis. Binding of fH to the bacteria surface is independent of bacterial sialic acid moieties (PubMed:16751403). fH binding affinity is high enough that it may sequester plasma fH, depleting its circulating levels and de-regulating complement in the host (Probable). This protein induces high levels of bactericidal antibodies in mice (PubMed:12642606, PubMed:15039331, PubMed:15664958, PubMed:21753121, PubMed:23133374).</text>
</comment>
<comment type="subunit">
    <text evidence="6 7 9 11">Binds to host factor H (fH from human) (PubMed:16751403, PubMed:16785547, PubMed:19225461, PubMed:23133374). Both fHbp beta-barrels contact Sushi domains 6 and 7 in fH (also called complement control protein domains, CCP). This interaction probably mimics the normal (carbohydrate-dependent) mode of fH recruitement, regulating fH activity. Sucrose octasulphate inhibits the fHbp-fH interaction (PubMed:16785547, PubMed:19225461, PubMed:23133374).</text>
</comment>
<comment type="interaction">
    <interactant intactId="EBI-15758684">
        <id>Q9JXV4</id>
    </interactant>
    <interactant intactId="EBI-1223708">
        <id>P08603</id>
        <label>CFH</label>
    </interactant>
    <organismsDiffer>true</organismsDiffer>
    <experiments>6</experiments>
</comment>
<comment type="subcellular location">
    <subcellularLocation>
        <location evidence="16">Cell outer membrane</location>
        <topology evidence="16">Lipid-anchor</topology>
    </subcellularLocation>
    <subcellularLocation>
        <location evidence="2">Secreted</location>
    </subcellularLocation>
    <subcellularLocation>
        <location evidence="2">Extracellular vesicle</location>
        <location evidence="2">Bacterial extracellular vesicle</location>
    </subcellularLocation>
    <text evidence="2">Surface exposed on encapsulated and non-encapsulated strains. In freshly innoculated cells no secreted protein is seen, as cultures grow the amount of protein in the cell supernatant increases.</text>
</comment>
<comment type="induction">
    <text evidence="2">The amount of protein increases as cells approach stationary phase (at protein level).</text>
</comment>
<comment type="domain">
    <text evidence="4 5 9 10">Divided into 3 domains by antibody recognition; domain A (27-119), domain B (120-183) and domain C (184-274). Domain A contains linear epitopes that are common to the three GNA 1870 (fHbp) variants, antibodies against it recognize N.meningitidis cells. Domain B contains linear epitopes common to variant 1 proteins but antibodies against it do not give a robust signal against N.meningitidis cells. Domain C does not have linear epitopes but antibodies against it recognize N.meningitidis cells. Bactericidal antibodies are directed against conformational epitopes located in the BC domain (PubMed:15664958). Structures show there are 2 beta barrel domains, 51-156 and 167-274 each form an 8-stranded antiparallel beta-barrel joined by linker between 157-166 (PubMed:16407174, PubMed:19225461, PubMed:21753121).</text>
</comment>
<comment type="PTM">
    <text evidence="2">Protein is lipidated in N.meningitidis upon growth in radioactive palmitic acid, probably on Cys-20.</text>
</comment>
<comment type="disruption phenotype">
    <text evidence="7">Bacteria are more sensitive to complement-mediated killing.</text>
</comment>
<comment type="biotechnology">
    <text evidence="2 3 8 10 21">Part of an outer membrane vesicle vaccine; antisera against this protein induce efficient complement-mediated killing of the homologous strain. Three antigenic variant groups were detected upon sequencing of group B strains; antibodies against a single variant group provide reduced protection against the other 2 groups. Thus inclusion of an example of each in a vaccine may provide adequate protection against all strains. Recombinant protein lipidation increases its immunogenicity (PubMed:12642606, PubMed:15039331). This is the variant used in the 5CVMB vaccine (PubMed:16825336). Engineering fHbp to include the antigenic epitopes of the 3 main group variants to produce a single protein for vaccine production has lead to a molecule with increased antigenic efficacy. This G1 variant has 23 changes compared to the MC58 standard; its X-ray structure is reported (PubMed:21753121).</text>
</comment>
<comment type="miscellaneous">
    <text evidence="15">One of the major antigens of group B N.meningitidis and a powerful protective antigen. It is highly variable, over 300 protein variants have been seen (see Factor H binding protein sequence typing website). The protein in strain MC58 is called V1.</text>
</comment>
<comment type="similarity">
    <text evidence="15">Belongs to the factor H binding-protein family.</text>
</comment>
<comment type="sequence caution" evidence="16">
    <conflict type="erroneous initiation">
        <sequence resource="EMBL-CDS" id="AAF42204"/>
    </conflict>
    <text>Extended N-terminus.</text>
</comment>
<comment type="online information" name="Factor H binding protein sequence typing">
    <link uri="https://pubmlst.org/organisms/neisseria-spp/fhbp"/>
</comment>
<comment type="online information" name="Bexsero meningococcal group B Vaccine">
    <link uri="https://www.ema.europa.eu/en/medicines/human/EPAR/bexsero"/>
</comment>
<dbReference type="EMBL" id="AE002098">
    <property type="protein sequence ID" value="AAF42204.1"/>
    <property type="status" value="ALT_INIT"/>
    <property type="molecule type" value="Genomic_DNA"/>
</dbReference>
<dbReference type="PIR" id="D81032">
    <property type="entry name" value="D81032"/>
</dbReference>
<dbReference type="RefSeq" id="NP_274866.1">
    <property type="nucleotide sequence ID" value="NC_003112.2"/>
</dbReference>
<dbReference type="PDB" id="1YS5">
    <property type="method" value="NMR"/>
    <property type="chains" value="A=120-274"/>
</dbReference>
<dbReference type="PDB" id="2W80">
    <property type="method" value="X-ray"/>
    <property type="resolution" value="2.35 A"/>
    <property type="chains" value="C/D/F/H=25-274"/>
</dbReference>
<dbReference type="PDB" id="2W81">
    <property type="method" value="X-ray"/>
    <property type="resolution" value="2.35 A"/>
    <property type="chains" value="C/D/F=25-274"/>
</dbReference>
<dbReference type="PDB" id="2Y7S">
    <property type="method" value="X-ray"/>
    <property type="resolution" value="1.90 A"/>
    <property type="chains" value="A/B=27-274"/>
</dbReference>
<dbReference type="PDB" id="2YPV">
    <property type="method" value="X-ray"/>
    <property type="resolution" value="1.80 A"/>
    <property type="chains" value="A=23-274"/>
</dbReference>
<dbReference type="PDB" id="4AYD">
    <property type="method" value="X-ray"/>
    <property type="resolution" value="2.40 A"/>
    <property type="chains" value="C/D/F=27-274"/>
</dbReference>
<dbReference type="PDB" id="4AYE">
    <property type="method" value="X-ray"/>
    <property type="resolution" value="2.80 A"/>
    <property type="chains" value="C/D/F=27-274"/>
</dbReference>
<dbReference type="PDB" id="5NQX">
    <property type="method" value="X-ray"/>
    <property type="resolution" value="3.66 A"/>
    <property type="chains" value="A/B/C/D/E=26-247, A/B/C/D/E=249-274"/>
</dbReference>
<dbReference type="PDB" id="5NQZ">
    <property type="method" value="X-ray"/>
    <property type="resolution" value="1.63 A"/>
    <property type="chains" value="A/B=27-274"/>
</dbReference>
<dbReference type="PDB" id="5O14">
    <property type="method" value="X-ray"/>
    <property type="resolution" value="2.19 A"/>
    <property type="chains" value="A/B=27-274"/>
</dbReference>
<dbReference type="PDB" id="5T5F">
    <property type="method" value="X-ray"/>
    <property type="resolution" value="2.98 A"/>
    <property type="chains" value="A=23-274"/>
</dbReference>
<dbReference type="PDB" id="6XZW">
    <property type="method" value="X-ray"/>
    <property type="resolution" value="2.40 A"/>
    <property type="chains" value="D=27-274"/>
</dbReference>
<dbReference type="PDB" id="7KET">
    <property type="method" value="X-ray"/>
    <property type="resolution" value="2.00 A"/>
    <property type="chains" value="C=20-274"/>
</dbReference>
<dbReference type="PDB" id="7LCV">
    <property type="method" value="X-ray"/>
    <property type="resolution" value="1.70 A"/>
    <property type="chains" value="C=20-274"/>
</dbReference>
<dbReference type="PDB" id="7SBZ">
    <property type="method" value="X-ray"/>
    <property type="resolution" value="2.90 A"/>
    <property type="chains" value="C/D=27-274"/>
</dbReference>
<dbReference type="PDB" id="8UP2">
    <property type="method" value="X-ray"/>
    <property type="resolution" value="1.60 A"/>
    <property type="chains" value="C/F=27-274"/>
</dbReference>
<dbReference type="PDBsum" id="1YS5"/>
<dbReference type="PDBsum" id="2W80"/>
<dbReference type="PDBsum" id="2W81"/>
<dbReference type="PDBsum" id="2Y7S"/>
<dbReference type="PDBsum" id="2YPV"/>
<dbReference type="PDBsum" id="4AYD"/>
<dbReference type="PDBsum" id="4AYE"/>
<dbReference type="PDBsum" id="5NQX"/>
<dbReference type="PDBsum" id="5NQZ"/>
<dbReference type="PDBsum" id="5O14"/>
<dbReference type="PDBsum" id="5T5F"/>
<dbReference type="PDBsum" id="6XZW"/>
<dbReference type="PDBsum" id="7KET"/>
<dbReference type="PDBsum" id="7LCV"/>
<dbReference type="PDBsum" id="7SBZ"/>
<dbReference type="PDBsum" id="8UP2"/>
<dbReference type="SMR" id="Q9JXV4"/>
<dbReference type="DIP" id="DIP-59745N"/>
<dbReference type="IntAct" id="Q9JXV4">
    <property type="interactions" value="1"/>
</dbReference>
<dbReference type="STRING" id="122586.NMB1870"/>
<dbReference type="PaxDb" id="122586-NMB1870"/>
<dbReference type="ABCD" id="Q9JXV4">
    <property type="antibodies" value="13 sequenced antibodies"/>
</dbReference>
<dbReference type="KEGG" id="nme:NMB1870"/>
<dbReference type="PATRIC" id="fig|122586.8.peg.2390"/>
<dbReference type="HOGENOM" id="CLU_086005_0_0_4"/>
<dbReference type="InParanoid" id="Q9JXV4"/>
<dbReference type="OrthoDB" id="6688917at2"/>
<dbReference type="EvolutionaryTrace" id="Q9JXV4"/>
<dbReference type="Proteomes" id="UP000000425">
    <property type="component" value="Chromosome"/>
</dbReference>
<dbReference type="GO" id="GO:0097691">
    <property type="term" value="C:bacterial extracellular vesicle"/>
    <property type="evidence" value="ECO:0007669"/>
    <property type="project" value="UniProtKB-SubCell"/>
</dbReference>
<dbReference type="GO" id="GO:0009279">
    <property type="term" value="C:cell outer membrane"/>
    <property type="evidence" value="ECO:0007669"/>
    <property type="project" value="UniProtKB-SubCell"/>
</dbReference>
<dbReference type="Gene3D" id="2.40.160.90">
    <property type="match status" value="1"/>
</dbReference>
<dbReference type="Gene3D" id="2.60.40.1980">
    <property type="match status" value="1"/>
</dbReference>
<dbReference type="InterPro" id="IPR049378">
    <property type="entry name" value="FHBP"/>
</dbReference>
<dbReference type="InterPro" id="IPR014902">
    <property type="entry name" value="FHBP-like_C"/>
</dbReference>
<dbReference type="InterPro" id="IPR049377">
    <property type="entry name" value="FHBP_N"/>
</dbReference>
<dbReference type="InterPro" id="IPR011250">
    <property type="entry name" value="OMP/PagP_b-brl"/>
</dbReference>
<dbReference type="NCBIfam" id="NF041466">
    <property type="entry name" value="factorH_bind"/>
    <property type="match status" value="1"/>
</dbReference>
<dbReference type="Pfam" id="PF08794">
    <property type="entry name" value="FHBP_C"/>
    <property type="match status" value="1"/>
</dbReference>
<dbReference type="Pfam" id="PF20937">
    <property type="entry name" value="FHBP_N"/>
    <property type="match status" value="1"/>
</dbReference>
<dbReference type="SUPFAM" id="SSF56925">
    <property type="entry name" value="OMPA-like"/>
    <property type="match status" value="1"/>
</dbReference>
<dbReference type="PROSITE" id="PS51257">
    <property type="entry name" value="PROKAR_LIPOPROTEIN"/>
    <property type="match status" value="1"/>
</dbReference>
<sequence length="274" mass="28990">MNRTAFCCLSLTTALILTACSSGGGGVAADIGAGLADALTAPLDHKDKGLQSLTLDQSVRKNEKLKLAAQGAEKTYGNGDSLNTGKLKNDKVSRFDFIRQIEVDGQLITLESGEFQVYKQSHSALTAFQTEQIQDSEHSGKMVAKRQFRIGDIAGEHTSFDKLPEGGRATYRGTAFGSDDAGGKLTYTIDFAAKQGNGKIEHLKSPELNVDLAAADIKPDGKRHAVISGSVLYNQAEKGSYSLGIFGGKAQEVAGSAEVKTVNGIRHIGLAAKQ</sequence>
<proteinExistence type="evidence at protein level"/>
<protein>
    <recommendedName>
        <fullName evidence="14">Factor H binding protein</fullName>
        <shortName evidence="14">fHbp</shortName>
    </recommendedName>
    <alternativeName>
        <fullName evidence="12">Genome-derived Neisseria antigen 1870</fullName>
        <shortName evidence="12">GNA1870</shortName>
    </alternativeName>
    <alternativeName>
        <fullName>Lipoprotein 2086</fullName>
        <shortName evidence="13">LP2086</shortName>
    </alternativeName>
</protein>
<organism>
    <name type="scientific">Neisseria meningitidis serogroup B (strain ATCC BAA-335 / MC58)</name>
    <dbReference type="NCBI Taxonomy" id="122586"/>
    <lineage>
        <taxon>Bacteria</taxon>
        <taxon>Pseudomonadati</taxon>
        <taxon>Pseudomonadota</taxon>
        <taxon>Betaproteobacteria</taxon>
        <taxon>Neisseriales</taxon>
        <taxon>Neisseriaceae</taxon>
        <taxon>Neisseria</taxon>
    </lineage>
</organism>